<name>ABF1_CAEEL</name>
<proteinExistence type="evidence at transcript level"/>
<feature type="signal peptide" evidence="1">
    <location>
        <begin position="1"/>
        <end position="19"/>
    </location>
</feature>
<feature type="peptide" id="PRO_0000430529" description="Antibacterial factor-related peptide 1" evidence="1">
    <location>
        <begin position="20"/>
        <end position="85"/>
    </location>
</feature>
<reference evidence="5" key="1">
    <citation type="journal article" date="2002" name="Biochem. J.">
        <title>abf-1 and abf-2, ASABF-type antimicrobial peptide genes in Caenorhabditis elegans.</title>
        <authorList>
            <person name="Kato Y."/>
            <person name="Aizawa T."/>
            <person name="Hoshino H."/>
            <person name="Kawano K."/>
            <person name="Zhang H."/>
        </authorList>
    </citation>
    <scope>NUCLEOTIDE SEQUENCE [MRNA]</scope>
    <scope>TISSUE SPECIFICITY</scope>
    <scope>DEVELOPMENTAL STAGE</scope>
</reference>
<reference evidence="6" key="2">
    <citation type="journal article" date="1998" name="Science">
        <title>Genome sequence of the nematode C. elegans: a platform for investigating biology.</title>
        <authorList>
            <consortium name="The C. elegans sequencing consortium"/>
        </authorList>
    </citation>
    <scope>NUCLEOTIDE SEQUENCE [LARGE SCALE GENOMIC DNA]</scope>
    <source>
        <strain evidence="6">Bristol N2</strain>
    </source>
</reference>
<comment type="subcellular location">
    <subcellularLocation>
        <location evidence="4">Secreted</location>
    </subcellularLocation>
</comment>
<comment type="tissue specificity">
    <text evidence="2">Expressed in the pharynx and body wall muscle.</text>
</comment>
<comment type="developmental stage">
    <text evidence="2">Expressed in all larval and adult stages but not in pre-hatching embryos.</text>
</comment>
<sequence>MLYFCLLLVLLLPNNGVSSEASCARMDVPVMQRIAQGLCTSSCTAQKCMTGICKKVDSHPTCFCGGCSNANDVSLDTLISQLPHN</sequence>
<dbReference type="EMBL" id="AB029809">
    <property type="protein sequence ID" value="BAA89489.1"/>
    <property type="molecule type" value="mRNA"/>
</dbReference>
<dbReference type="EMBL" id="FO080915">
    <property type="protein sequence ID" value="CCD67777.1"/>
    <property type="molecule type" value="Genomic_DNA"/>
</dbReference>
<dbReference type="RefSeq" id="NP_491253.1">
    <property type="nucleotide sequence ID" value="NM_058852.7"/>
</dbReference>
<dbReference type="SMR" id="G5EGC4"/>
<dbReference type="FunCoup" id="G5EGC4">
    <property type="interactions" value="1"/>
</dbReference>
<dbReference type="STRING" id="6239.C50F2.9.1"/>
<dbReference type="PaxDb" id="6239-C50F2.9"/>
<dbReference type="EnsemblMetazoa" id="C50F2.9.1">
    <property type="protein sequence ID" value="C50F2.9.1"/>
    <property type="gene ID" value="WBGene00000012"/>
</dbReference>
<dbReference type="GeneID" id="266827"/>
<dbReference type="KEGG" id="cel:CELE_C50F2.9"/>
<dbReference type="AGR" id="WB:WBGene00000012"/>
<dbReference type="CTD" id="266827"/>
<dbReference type="WormBase" id="C50F2.9">
    <property type="protein sequence ID" value="CE27879"/>
    <property type="gene ID" value="WBGene00000012"/>
    <property type="gene designation" value="abf-1"/>
</dbReference>
<dbReference type="GeneTree" id="ENSGT00970000196640"/>
<dbReference type="HOGENOM" id="CLU_172752_1_0_1"/>
<dbReference type="InParanoid" id="G5EGC4"/>
<dbReference type="OMA" id="CARMDVF"/>
<dbReference type="OrthoDB" id="10372279at2759"/>
<dbReference type="PhylomeDB" id="G5EGC4"/>
<dbReference type="PRO" id="PR:G5EGC4"/>
<dbReference type="Proteomes" id="UP000001940">
    <property type="component" value="Chromosome I"/>
</dbReference>
<dbReference type="Bgee" id="WBGene00000012">
    <property type="expression patterns" value="Expressed in adult organism and 3 other cell types or tissues"/>
</dbReference>
<dbReference type="GO" id="GO:0005576">
    <property type="term" value="C:extracellular region"/>
    <property type="evidence" value="ECO:0007669"/>
    <property type="project" value="UniProtKB-SubCell"/>
</dbReference>
<dbReference type="GO" id="GO:0098542">
    <property type="term" value="P:defense response to other organism"/>
    <property type="evidence" value="ECO:0007669"/>
    <property type="project" value="InterPro"/>
</dbReference>
<dbReference type="Gene3D" id="3.30.30.110">
    <property type="entry name" value="Antibacterial factor-related peptide"/>
    <property type="match status" value="1"/>
</dbReference>
<dbReference type="InterPro" id="IPR031770">
    <property type="entry name" value="Abf-1/2"/>
</dbReference>
<dbReference type="InterPro" id="IPR038204">
    <property type="entry name" value="Abf-1/2_sf"/>
</dbReference>
<dbReference type="PANTHER" id="PTHR37971">
    <property type="entry name" value="ANTIBACTERIAL FACTOR-RELATED PEPTIDE 1-RELATED"/>
    <property type="match status" value="1"/>
</dbReference>
<dbReference type="PANTHER" id="PTHR37971:SF1">
    <property type="entry name" value="ANTIBACTERIAL FACTOR-RELATED PEPTIDE 1-RELATED"/>
    <property type="match status" value="1"/>
</dbReference>
<dbReference type="Pfam" id="PF16839">
    <property type="entry name" value="Antimicrobial25"/>
    <property type="match status" value="1"/>
</dbReference>
<organism evidence="5">
    <name type="scientific">Caenorhabditis elegans</name>
    <dbReference type="NCBI Taxonomy" id="6239"/>
    <lineage>
        <taxon>Eukaryota</taxon>
        <taxon>Metazoa</taxon>
        <taxon>Ecdysozoa</taxon>
        <taxon>Nematoda</taxon>
        <taxon>Chromadorea</taxon>
        <taxon>Rhabditida</taxon>
        <taxon>Rhabditina</taxon>
        <taxon>Rhabditomorpha</taxon>
        <taxon>Rhabditoidea</taxon>
        <taxon>Rhabditidae</taxon>
        <taxon>Peloderinae</taxon>
        <taxon>Caenorhabditis</taxon>
    </lineage>
</organism>
<evidence type="ECO:0000255" key="1"/>
<evidence type="ECO:0000269" key="2">
    <source>
    </source>
</evidence>
<evidence type="ECO:0000303" key="3">
    <source>
    </source>
</evidence>
<evidence type="ECO:0000305" key="4"/>
<evidence type="ECO:0000312" key="5">
    <source>
        <dbReference type="EMBL" id="BAA89489.1"/>
    </source>
</evidence>
<evidence type="ECO:0000312" key="6">
    <source>
        <dbReference type="EMBL" id="CCD67777.1"/>
    </source>
</evidence>
<evidence type="ECO:0000312" key="7">
    <source>
        <dbReference type="WormBase" id="C50F2.9"/>
    </source>
</evidence>
<keyword id="KW-1185">Reference proteome</keyword>
<keyword id="KW-0964">Secreted</keyword>
<keyword id="KW-0732">Signal</keyword>
<accession>G5EGC4</accession>
<protein>
    <recommendedName>
        <fullName evidence="3">Antibacterial factor-related peptide 1</fullName>
    </recommendedName>
</protein>
<gene>
    <name evidence="7" type="primary">abf-1</name>
    <name evidence="7" type="ORF">C50F2.9</name>
</gene>